<sequence>MEKPTRQTPFYTQHRAELLVLSSQIAAALLHALARVVEVGSGLKERVHPFTVLQIRLFITVLGCTAYLWRARIDFLGPTGLRPLLALRAAGGVFGACGFYLSISYLSLSEATVLNFIAPLGAIMLTTYWEGRTFAFLDLIACITALAGVVLVLQPIPIYKAVAQAEISSSISTDPYAHLKGVVSGITGVAGGIVAFSAMNRLGKNVQPAVTINYFGVSICIVTTAFSTIMPEVVWPTRIESWCLLAIIGILGLVMEYLLTAGLGSDDPRVTIMIYSQVLWALFLDWAIWRSHVNVLTVLGSMVVVASLAVPYLFRESSHPKEDMFSTRSGMDDIEEGQDEAHANYISLE</sequence>
<protein>
    <recommendedName>
        <fullName evidence="3">Probable transporter vicT</fullName>
    </recommendedName>
    <alternativeName>
        <fullName evidence="3">Victorin biosynthesis cluster protein T</fullName>
    </alternativeName>
</protein>
<evidence type="ECO:0000255" key="1"/>
<evidence type="ECO:0000269" key="2">
    <source>
    </source>
</evidence>
<evidence type="ECO:0000303" key="3">
    <source>
    </source>
</evidence>
<evidence type="ECO:0000305" key="4"/>
<comment type="function">
    <text evidence="2">Probable transporter; part of the gene cluster that mediates the biosynthesis of the secondary metabolite victorin, the molecular basis for Victoria blight of oats.</text>
</comment>
<comment type="subcellular location">
    <subcellularLocation>
        <location evidence="1">Membrane</location>
        <topology evidence="1">Multi-pass membrane protein</topology>
    </subcellularLocation>
</comment>
<comment type="similarity">
    <text evidence="4">Belongs to the TPT transporter family. SLC35D subfamily.</text>
</comment>
<dbReference type="EMBL" id="KI969035">
    <property type="protein sequence ID" value="EUN20451.1"/>
    <property type="molecule type" value="Genomic_DNA"/>
</dbReference>
<dbReference type="RefSeq" id="XP_014550025.1">
    <property type="nucleotide sequence ID" value="XM_014694539.1"/>
</dbReference>
<dbReference type="SMR" id="W7DWT4"/>
<dbReference type="GeneID" id="26250967"/>
<dbReference type="HOGENOM" id="CLU_032828_4_3_1"/>
<dbReference type="Proteomes" id="UP000054337">
    <property type="component" value="Unassembled WGS sequence"/>
</dbReference>
<dbReference type="GO" id="GO:0016020">
    <property type="term" value="C:membrane"/>
    <property type="evidence" value="ECO:0007669"/>
    <property type="project" value="UniProtKB-SubCell"/>
</dbReference>
<dbReference type="InterPro" id="IPR000620">
    <property type="entry name" value="EamA_dom"/>
</dbReference>
<dbReference type="PANTHER" id="PTHR22911">
    <property type="entry name" value="ACYL-MALONYL CONDENSING ENZYME-RELATED"/>
    <property type="match status" value="1"/>
</dbReference>
<dbReference type="PANTHER" id="PTHR22911:SF6">
    <property type="entry name" value="SOLUTE CARRIER FAMILY 35 MEMBER G1"/>
    <property type="match status" value="1"/>
</dbReference>
<dbReference type="Pfam" id="PF00892">
    <property type="entry name" value="EamA"/>
    <property type="match status" value="1"/>
</dbReference>
<dbReference type="SUPFAM" id="SSF103481">
    <property type="entry name" value="Multidrug resistance efflux transporter EmrE"/>
    <property type="match status" value="2"/>
</dbReference>
<organism>
    <name type="scientific">Bipolaris victoriae (strain FI3)</name>
    <name type="common">Victoria blight of oats agent</name>
    <name type="synonym">Cochliobolus victoriae</name>
    <dbReference type="NCBI Taxonomy" id="930091"/>
    <lineage>
        <taxon>Eukaryota</taxon>
        <taxon>Fungi</taxon>
        <taxon>Dikarya</taxon>
        <taxon>Ascomycota</taxon>
        <taxon>Pezizomycotina</taxon>
        <taxon>Dothideomycetes</taxon>
        <taxon>Pleosporomycetidae</taxon>
        <taxon>Pleosporales</taxon>
        <taxon>Pleosporineae</taxon>
        <taxon>Pleosporaceae</taxon>
        <taxon>Bipolaris</taxon>
    </lineage>
</organism>
<reference key="1">
    <citation type="journal article" date="2013" name="PLoS Genet.">
        <title>Comparative genome structure, secondary metabolite, and effector coding capacity across Cochliobolus pathogens.</title>
        <authorList>
            <person name="Condon B.J."/>
            <person name="Leng Y."/>
            <person name="Wu D."/>
            <person name="Bushley K.E."/>
            <person name="Ohm R.A."/>
            <person name="Otillar R."/>
            <person name="Martin J."/>
            <person name="Schackwitz W."/>
            <person name="Grimwood J."/>
            <person name="MohdZainudin N."/>
            <person name="Xue C."/>
            <person name="Wang R."/>
            <person name="Manning V.A."/>
            <person name="Dhillon B."/>
            <person name="Tu Z.J."/>
            <person name="Steffenson B.J."/>
            <person name="Salamov A."/>
            <person name="Sun H."/>
            <person name="Lowry S."/>
            <person name="LaButti K."/>
            <person name="Han J."/>
            <person name="Copeland A."/>
            <person name="Lindquist E."/>
            <person name="Barry K."/>
            <person name="Schmutz J."/>
            <person name="Baker S.E."/>
            <person name="Ciuffetti L.M."/>
            <person name="Grigoriev I.V."/>
            <person name="Zhong S."/>
            <person name="Turgeon B.G."/>
        </authorList>
    </citation>
    <scope>NUCLEOTIDE SEQUENCE [LARGE SCALE GENOMIC DNA]</scope>
    <source>
        <strain>FI3</strain>
    </source>
</reference>
<reference key="2">
    <citation type="journal article" date="2020" name="Proc. Natl. Acad. Sci. U.S.A.">
        <title>Victorin, the host-selective cyclic peptide toxin from the oat pathogen Cochliobolus victoriae, is ribosomally encoded.</title>
        <authorList>
            <person name="Kessler S.C."/>
            <person name="Zhang X."/>
            <person name="McDonald M.C."/>
            <person name="Gilchrist C.L.M."/>
            <person name="Lin Z."/>
            <person name="Rightmyer A."/>
            <person name="Solomon P.S."/>
            <person name="Turgeon B.G."/>
            <person name="Chooi Y.H."/>
        </authorList>
    </citation>
    <scope>FUNCTION</scope>
</reference>
<name>VICT_BIPV3</name>
<keyword id="KW-0472">Membrane</keyword>
<keyword id="KW-0812">Transmembrane</keyword>
<keyword id="KW-1133">Transmembrane helix</keyword>
<keyword id="KW-0813">Transport</keyword>
<keyword id="KW-0843">Virulence</keyword>
<proteinExistence type="inferred from homology"/>
<gene>
    <name evidence="3" type="primary">vicT</name>
    <name type="ORF">COCVIDRAFT_116826</name>
</gene>
<feature type="chain" id="PRO_0000458387" description="Probable transporter vicT">
    <location>
        <begin position="1"/>
        <end position="349"/>
    </location>
</feature>
<feature type="transmembrane region" description="Helical" evidence="1">
    <location>
        <begin position="49"/>
        <end position="69"/>
    </location>
</feature>
<feature type="transmembrane region" description="Helical" evidence="1">
    <location>
        <begin position="89"/>
        <end position="109"/>
    </location>
</feature>
<feature type="transmembrane region" description="Helical" evidence="1">
    <location>
        <begin position="111"/>
        <end position="131"/>
    </location>
</feature>
<feature type="transmembrane region" description="Helical" evidence="1">
    <location>
        <begin position="133"/>
        <end position="153"/>
    </location>
</feature>
<feature type="transmembrane region" description="Helical" evidence="1">
    <location>
        <begin position="179"/>
        <end position="199"/>
    </location>
</feature>
<feature type="transmembrane region" description="Helical" evidence="1">
    <location>
        <begin position="215"/>
        <end position="235"/>
    </location>
</feature>
<feature type="transmembrane region" description="Helical" evidence="1">
    <location>
        <begin position="244"/>
        <end position="264"/>
    </location>
</feature>
<feature type="transmembrane region" description="Helical" evidence="1">
    <location>
        <begin position="269"/>
        <end position="289"/>
    </location>
</feature>
<feature type="transmembrane region" description="Helical" evidence="1">
    <location>
        <begin position="294"/>
        <end position="314"/>
    </location>
</feature>
<feature type="domain" description="EamA" evidence="1">
    <location>
        <begin position="25"/>
        <end position="153"/>
    </location>
</feature>
<accession>W7DWT4</accession>